<keyword id="KW-0342">GTP-binding</keyword>
<keyword id="KW-0378">Hydrolase</keyword>
<keyword id="KW-0547">Nucleotide-binding</keyword>
<keyword id="KW-0554">One-carbon metabolism</keyword>
<keyword id="KW-1185">Reference proteome</keyword>
<comment type="catalytic activity">
    <reaction evidence="1">
        <text>GTP + H2O = 7,8-dihydroneopterin 3'-triphosphate + formate + H(+)</text>
        <dbReference type="Rhea" id="RHEA:17473"/>
        <dbReference type="ChEBI" id="CHEBI:15377"/>
        <dbReference type="ChEBI" id="CHEBI:15378"/>
        <dbReference type="ChEBI" id="CHEBI:15740"/>
        <dbReference type="ChEBI" id="CHEBI:37565"/>
        <dbReference type="ChEBI" id="CHEBI:58462"/>
        <dbReference type="EC" id="3.5.4.16"/>
    </reaction>
</comment>
<comment type="pathway">
    <text evidence="1">Cofactor biosynthesis; 7,8-dihydroneopterin triphosphate biosynthesis; 7,8-dihydroneopterin triphosphate from GTP: step 1/1.</text>
</comment>
<comment type="subunit">
    <text evidence="1">Homomer.</text>
</comment>
<comment type="similarity">
    <text evidence="1">Belongs to the GTP cyclohydrolase I family.</text>
</comment>
<accession>Q887V1</accession>
<evidence type="ECO:0000255" key="1">
    <source>
        <dbReference type="HAMAP-Rule" id="MF_00223"/>
    </source>
</evidence>
<gene>
    <name evidence="1" type="primary">folE1</name>
    <name type="ordered locus">PSPTO_1182</name>
</gene>
<sequence length="187" mass="20914">MSSSLPQHYRDILLELGENPEREGLLDTPKRASKAMQYLCHGYTQTVEEIVNGALFASDNDEMVIVQNIELYSLCEHHLLPFIGKAHVAYIPTGKVLGLSKIARIVDMFARRLQIQENLTKQIADSIQQVTGAAGVAVVIEAQHMCMMMRGVEKQNSTMNTSVMLGAFRESSTTRMEFLQLIGRSRT</sequence>
<proteinExistence type="inferred from homology"/>
<name>GCH11_PSESM</name>
<organism>
    <name type="scientific">Pseudomonas syringae pv. tomato (strain ATCC BAA-871 / DC3000)</name>
    <dbReference type="NCBI Taxonomy" id="223283"/>
    <lineage>
        <taxon>Bacteria</taxon>
        <taxon>Pseudomonadati</taxon>
        <taxon>Pseudomonadota</taxon>
        <taxon>Gammaproteobacteria</taxon>
        <taxon>Pseudomonadales</taxon>
        <taxon>Pseudomonadaceae</taxon>
        <taxon>Pseudomonas</taxon>
    </lineage>
</organism>
<feature type="chain" id="PRO_0000119432" description="GTP cyclohydrolase 1 1">
    <location>
        <begin position="1"/>
        <end position="187"/>
    </location>
</feature>
<dbReference type="EC" id="3.5.4.16" evidence="1"/>
<dbReference type="EMBL" id="AE016853">
    <property type="protein sequence ID" value="AAO54709.1"/>
    <property type="molecule type" value="Genomic_DNA"/>
</dbReference>
<dbReference type="RefSeq" id="NP_791014.1">
    <property type="nucleotide sequence ID" value="NC_004578.1"/>
</dbReference>
<dbReference type="SMR" id="Q887V1"/>
<dbReference type="STRING" id="223283.PSPTO_1182"/>
<dbReference type="GeneID" id="1182818"/>
<dbReference type="KEGG" id="pst:PSPTO_1182"/>
<dbReference type="PATRIC" id="fig|223283.9.peg.1199"/>
<dbReference type="eggNOG" id="COG0302">
    <property type="taxonomic scope" value="Bacteria"/>
</dbReference>
<dbReference type="HOGENOM" id="CLU_049768_3_1_6"/>
<dbReference type="OrthoDB" id="9801207at2"/>
<dbReference type="PhylomeDB" id="Q887V1"/>
<dbReference type="UniPathway" id="UPA00848">
    <property type="reaction ID" value="UER00151"/>
</dbReference>
<dbReference type="Proteomes" id="UP000002515">
    <property type="component" value="Chromosome"/>
</dbReference>
<dbReference type="GO" id="GO:0005737">
    <property type="term" value="C:cytoplasm"/>
    <property type="evidence" value="ECO:0007669"/>
    <property type="project" value="TreeGrafter"/>
</dbReference>
<dbReference type="GO" id="GO:0005525">
    <property type="term" value="F:GTP binding"/>
    <property type="evidence" value="ECO:0007669"/>
    <property type="project" value="UniProtKB-KW"/>
</dbReference>
<dbReference type="GO" id="GO:0003934">
    <property type="term" value="F:GTP cyclohydrolase I activity"/>
    <property type="evidence" value="ECO:0007669"/>
    <property type="project" value="UniProtKB-UniRule"/>
</dbReference>
<dbReference type="GO" id="GO:0008270">
    <property type="term" value="F:zinc ion binding"/>
    <property type="evidence" value="ECO:0007669"/>
    <property type="project" value="UniProtKB-UniRule"/>
</dbReference>
<dbReference type="GO" id="GO:0006730">
    <property type="term" value="P:one-carbon metabolic process"/>
    <property type="evidence" value="ECO:0007669"/>
    <property type="project" value="UniProtKB-UniRule"/>
</dbReference>
<dbReference type="GO" id="GO:0006729">
    <property type="term" value="P:tetrahydrobiopterin biosynthetic process"/>
    <property type="evidence" value="ECO:0007669"/>
    <property type="project" value="TreeGrafter"/>
</dbReference>
<dbReference type="GO" id="GO:0046654">
    <property type="term" value="P:tetrahydrofolate biosynthetic process"/>
    <property type="evidence" value="ECO:0007669"/>
    <property type="project" value="UniProtKB-UniRule"/>
</dbReference>
<dbReference type="FunFam" id="3.30.1130.10:FF:000001">
    <property type="entry name" value="GTP cyclohydrolase 1"/>
    <property type="match status" value="1"/>
</dbReference>
<dbReference type="Gene3D" id="1.10.286.10">
    <property type="match status" value="1"/>
</dbReference>
<dbReference type="Gene3D" id="3.30.1130.10">
    <property type="match status" value="1"/>
</dbReference>
<dbReference type="HAMAP" id="MF_00223">
    <property type="entry name" value="FolE"/>
    <property type="match status" value="1"/>
</dbReference>
<dbReference type="InterPro" id="IPR043133">
    <property type="entry name" value="GTP-CH-I_C/QueF"/>
</dbReference>
<dbReference type="InterPro" id="IPR043134">
    <property type="entry name" value="GTP-CH-I_N"/>
</dbReference>
<dbReference type="InterPro" id="IPR001474">
    <property type="entry name" value="GTP_CycHdrlase_I"/>
</dbReference>
<dbReference type="InterPro" id="IPR018234">
    <property type="entry name" value="GTP_CycHdrlase_I_CS"/>
</dbReference>
<dbReference type="InterPro" id="IPR020602">
    <property type="entry name" value="GTP_CycHdrlase_I_dom"/>
</dbReference>
<dbReference type="NCBIfam" id="TIGR00063">
    <property type="entry name" value="folE"/>
    <property type="match status" value="1"/>
</dbReference>
<dbReference type="NCBIfam" id="NF006825">
    <property type="entry name" value="PRK09347.1-2"/>
    <property type="match status" value="1"/>
</dbReference>
<dbReference type="NCBIfam" id="NF006826">
    <property type="entry name" value="PRK09347.1-3"/>
    <property type="match status" value="1"/>
</dbReference>
<dbReference type="PANTHER" id="PTHR11109:SF7">
    <property type="entry name" value="GTP CYCLOHYDROLASE 1"/>
    <property type="match status" value="1"/>
</dbReference>
<dbReference type="PANTHER" id="PTHR11109">
    <property type="entry name" value="GTP CYCLOHYDROLASE I"/>
    <property type="match status" value="1"/>
</dbReference>
<dbReference type="Pfam" id="PF01227">
    <property type="entry name" value="GTP_cyclohydroI"/>
    <property type="match status" value="1"/>
</dbReference>
<dbReference type="SUPFAM" id="SSF55620">
    <property type="entry name" value="Tetrahydrobiopterin biosynthesis enzymes-like"/>
    <property type="match status" value="1"/>
</dbReference>
<dbReference type="PROSITE" id="PS00859">
    <property type="entry name" value="GTP_CYCLOHYDROL_1_1"/>
    <property type="match status" value="1"/>
</dbReference>
<dbReference type="PROSITE" id="PS00860">
    <property type="entry name" value="GTP_CYCLOHYDROL_1_2"/>
    <property type="match status" value="1"/>
</dbReference>
<protein>
    <recommendedName>
        <fullName evidence="1">GTP cyclohydrolase 1 1</fullName>
        <ecNumber evidence="1">3.5.4.16</ecNumber>
    </recommendedName>
    <alternativeName>
        <fullName evidence="1">GTP cyclohydrolase I 1</fullName>
        <shortName evidence="1">GTP-CH-I 1</shortName>
    </alternativeName>
</protein>
<reference key="1">
    <citation type="journal article" date="2003" name="Proc. Natl. Acad. Sci. U.S.A.">
        <title>The complete genome sequence of the Arabidopsis and tomato pathogen Pseudomonas syringae pv. tomato DC3000.</title>
        <authorList>
            <person name="Buell C.R."/>
            <person name="Joardar V."/>
            <person name="Lindeberg M."/>
            <person name="Selengut J."/>
            <person name="Paulsen I.T."/>
            <person name="Gwinn M.L."/>
            <person name="Dodson R.J."/>
            <person name="DeBoy R.T."/>
            <person name="Durkin A.S."/>
            <person name="Kolonay J.F."/>
            <person name="Madupu R."/>
            <person name="Daugherty S.C."/>
            <person name="Brinkac L.M."/>
            <person name="Beanan M.J."/>
            <person name="Haft D.H."/>
            <person name="Nelson W.C."/>
            <person name="Davidsen T.M."/>
            <person name="Zafar N."/>
            <person name="Zhou L."/>
            <person name="Liu J."/>
            <person name="Yuan Q."/>
            <person name="Khouri H.M."/>
            <person name="Fedorova N.B."/>
            <person name="Tran B."/>
            <person name="Russell D."/>
            <person name="Berry K.J."/>
            <person name="Utterback T.R."/>
            <person name="Van Aken S.E."/>
            <person name="Feldblyum T.V."/>
            <person name="D'Ascenzo M."/>
            <person name="Deng W.-L."/>
            <person name="Ramos A.R."/>
            <person name="Alfano J.R."/>
            <person name="Cartinhour S."/>
            <person name="Chatterjee A.K."/>
            <person name="Delaney T.P."/>
            <person name="Lazarowitz S.G."/>
            <person name="Martin G.B."/>
            <person name="Schneider D.J."/>
            <person name="Tang X."/>
            <person name="Bender C.L."/>
            <person name="White O."/>
            <person name="Fraser C.M."/>
            <person name="Collmer A."/>
        </authorList>
    </citation>
    <scope>NUCLEOTIDE SEQUENCE [LARGE SCALE GENOMIC DNA]</scope>
    <source>
        <strain>ATCC BAA-871 / DC3000</strain>
    </source>
</reference>